<organism>
    <name type="scientific">Xenopus laevis</name>
    <name type="common">African clawed frog</name>
    <dbReference type="NCBI Taxonomy" id="8355"/>
    <lineage>
        <taxon>Eukaryota</taxon>
        <taxon>Metazoa</taxon>
        <taxon>Chordata</taxon>
        <taxon>Craniata</taxon>
        <taxon>Vertebrata</taxon>
        <taxon>Euteleostomi</taxon>
        <taxon>Amphibia</taxon>
        <taxon>Batrachia</taxon>
        <taxon>Anura</taxon>
        <taxon>Pipoidea</taxon>
        <taxon>Pipidae</taxon>
        <taxon>Xenopodinae</taxon>
        <taxon>Xenopus</taxon>
        <taxon>Xenopus</taxon>
    </lineage>
</organism>
<keyword id="KW-0106">Calcium</keyword>
<keyword id="KW-0963">Cytoplasm</keyword>
<keyword id="KW-1185">Reference proteome</keyword>
<sequence>MIIYKDCITEDEMFSDIYKIIETPDGMCLEVEGKVIQREEGAIDDALIGGNASAEFQEDDVGGSSLTSGVDIVMNHKLQETGFTKDSYKNYIKDYVKQLKAHLEKTNPERVNTFMKGAQETVKKILGNFKNYQFYTGERMNPDGMVGLLDYREDGITPFMIFFKDGLIIEKC</sequence>
<comment type="function">
    <text evidence="1">Involved in calcium binding and microtubule stabilization.</text>
</comment>
<comment type="interaction">
    <interactant intactId="EBI-1783711">
        <id>Q7ZYF2</id>
    </interactant>
    <interactant intactId="EBI-1783502">
        <id>Q5FWP4</id>
        <label>chfr</label>
    </interactant>
    <organismsDiffer>false</organismsDiffer>
    <experiments>3</experiments>
</comment>
<comment type="subcellular location">
    <subcellularLocation>
        <location evidence="1">Cytoplasm</location>
    </subcellularLocation>
</comment>
<comment type="similarity">
    <text evidence="2">Belongs to the TCTP family.</text>
</comment>
<accession>Q7ZYF2</accession>
<name>TCTP_XENLA</name>
<protein>
    <recommendedName>
        <fullName>Translationally-controlled tumor protein homolog</fullName>
        <shortName>TCTP</shortName>
    </recommendedName>
</protein>
<dbReference type="EMBL" id="BC043811">
    <property type="protein sequence ID" value="AAH43811.1"/>
    <property type="molecule type" value="mRNA"/>
</dbReference>
<dbReference type="SMR" id="Q7ZYF2"/>
<dbReference type="BioGRID" id="98081">
    <property type="interactions" value="1"/>
</dbReference>
<dbReference type="IntAct" id="Q7ZYF2">
    <property type="interactions" value="1"/>
</dbReference>
<dbReference type="GeneID" id="108708523"/>
<dbReference type="KEGG" id="xla:108708523"/>
<dbReference type="AGR" id="Xenbase:XB-GENE-866570"/>
<dbReference type="Xenbase" id="XB-GENE-866570">
    <property type="gene designation" value="tpt1.L"/>
</dbReference>
<dbReference type="OMA" id="CAMITEG"/>
<dbReference type="OrthoDB" id="10248936at2759"/>
<dbReference type="CD-CODE" id="78E86D56">
    <property type="entry name" value="Mitochondrial cloud"/>
</dbReference>
<dbReference type="Proteomes" id="UP000186698">
    <property type="component" value="Chromosome 2L"/>
</dbReference>
<dbReference type="Bgee" id="108708523">
    <property type="expression patterns" value="Expressed in lung and 19 other cell types or tissues"/>
</dbReference>
<dbReference type="GO" id="GO:0005737">
    <property type="term" value="C:cytoplasm"/>
    <property type="evidence" value="ECO:0000318"/>
    <property type="project" value="GO_Central"/>
</dbReference>
<dbReference type="GO" id="GO:0005509">
    <property type="term" value="F:calcium ion binding"/>
    <property type="evidence" value="ECO:0000318"/>
    <property type="project" value="GO_Central"/>
</dbReference>
<dbReference type="FunFam" id="2.170.150.10:FF:000001">
    <property type="entry name" value="Tumor protein, translationally-controlled 1"/>
    <property type="match status" value="1"/>
</dbReference>
<dbReference type="Gene3D" id="2.170.150.10">
    <property type="entry name" value="Metal Binding Protein, Guanine Nucleotide Exchange Factor, Chain A"/>
    <property type="match status" value="1"/>
</dbReference>
<dbReference type="InterPro" id="IPR011057">
    <property type="entry name" value="Mss4-like_sf"/>
</dbReference>
<dbReference type="InterPro" id="IPR011323">
    <property type="entry name" value="Mss4/transl-control_tumour"/>
</dbReference>
<dbReference type="InterPro" id="IPR034737">
    <property type="entry name" value="TCTP"/>
</dbReference>
<dbReference type="InterPro" id="IPR018103">
    <property type="entry name" value="Translation_control_tumour_CS"/>
</dbReference>
<dbReference type="InterPro" id="IPR018105">
    <property type="entry name" value="Translational_control_tumour_p"/>
</dbReference>
<dbReference type="PANTHER" id="PTHR11991">
    <property type="entry name" value="TRANSLATIONALLY CONTROLLED TUMOR PROTEIN-RELATED"/>
    <property type="match status" value="1"/>
</dbReference>
<dbReference type="PANTHER" id="PTHR11991:SF0">
    <property type="entry name" value="TRANSLATIONALLY-CONTROLLED TUMOR PROTEIN"/>
    <property type="match status" value="1"/>
</dbReference>
<dbReference type="Pfam" id="PF00838">
    <property type="entry name" value="TCTP"/>
    <property type="match status" value="1"/>
</dbReference>
<dbReference type="PRINTS" id="PR01653">
    <property type="entry name" value="TCTPROTEIN"/>
</dbReference>
<dbReference type="SUPFAM" id="SSF51316">
    <property type="entry name" value="Mss4-like"/>
    <property type="match status" value="1"/>
</dbReference>
<dbReference type="PROSITE" id="PS01002">
    <property type="entry name" value="TCTP_1"/>
    <property type="match status" value="1"/>
</dbReference>
<dbReference type="PROSITE" id="PS01003">
    <property type="entry name" value="TCTP_2"/>
    <property type="match status" value="1"/>
</dbReference>
<dbReference type="PROSITE" id="PS51797">
    <property type="entry name" value="TCTP_3"/>
    <property type="match status" value="1"/>
</dbReference>
<reference key="1">
    <citation type="submission" date="2003-01" db="EMBL/GenBank/DDBJ databases">
        <authorList>
            <consortium name="NIH - Xenopus Gene Collection (XGC) project"/>
        </authorList>
    </citation>
    <scope>NUCLEOTIDE SEQUENCE [LARGE SCALE MRNA]</scope>
    <source>
        <tissue>Embryo</tissue>
    </source>
</reference>
<gene>
    <name type="primary">tpt1</name>
</gene>
<proteinExistence type="evidence at protein level"/>
<evidence type="ECO:0000250" key="1"/>
<evidence type="ECO:0000255" key="2">
    <source>
        <dbReference type="PROSITE-ProRule" id="PRU01133"/>
    </source>
</evidence>
<feature type="chain" id="PRO_0000211277" description="Translationally-controlled tumor protein homolog">
    <location>
        <begin position="1"/>
        <end position="172"/>
    </location>
</feature>
<feature type="domain" description="TCTP" evidence="2">
    <location>
        <begin position="1"/>
        <end position="172"/>
    </location>
</feature>